<evidence type="ECO:0000255" key="1">
    <source>
        <dbReference type="HAMAP-Rule" id="MF_01833"/>
    </source>
</evidence>
<dbReference type="EC" id="4.6.1.16" evidence="1"/>
<dbReference type="EMBL" id="CP000855">
    <property type="protein sequence ID" value="ACJ16907.1"/>
    <property type="molecule type" value="Genomic_DNA"/>
</dbReference>
<dbReference type="RefSeq" id="WP_012572379.1">
    <property type="nucleotide sequence ID" value="NC_011529.1"/>
</dbReference>
<dbReference type="SMR" id="B6YXU4"/>
<dbReference type="STRING" id="523850.TON_1417"/>
<dbReference type="GeneID" id="7018451"/>
<dbReference type="KEGG" id="ton:TON_1417"/>
<dbReference type="PATRIC" id="fig|523850.10.peg.1428"/>
<dbReference type="eggNOG" id="arCOG01701">
    <property type="taxonomic scope" value="Archaea"/>
</dbReference>
<dbReference type="HOGENOM" id="CLU_114393_0_0_2"/>
<dbReference type="OrthoDB" id="46045at2157"/>
<dbReference type="Proteomes" id="UP000002727">
    <property type="component" value="Chromosome"/>
</dbReference>
<dbReference type="GO" id="GO:0005737">
    <property type="term" value="C:cytoplasm"/>
    <property type="evidence" value="ECO:0007669"/>
    <property type="project" value="TreeGrafter"/>
</dbReference>
<dbReference type="GO" id="GO:0016829">
    <property type="term" value="F:lyase activity"/>
    <property type="evidence" value="ECO:0007669"/>
    <property type="project" value="UniProtKB-KW"/>
</dbReference>
<dbReference type="GO" id="GO:0003676">
    <property type="term" value="F:nucleic acid binding"/>
    <property type="evidence" value="ECO:0007669"/>
    <property type="project" value="InterPro"/>
</dbReference>
<dbReference type="GO" id="GO:0000213">
    <property type="term" value="F:tRNA-intron endonuclease activity"/>
    <property type="evidence" value="ECO:0007669"/>
    <property type="project" value="UniProtKB-UniRule"/>
</dbReference>
<dbReference type="GO" id="GO:0006388">
    <property type="term" value="P:tRNA splicing, via endonucleolytic cleavage and ligation"/>
    <property type="evidence" value="ECO:0007669"/>
    <property type="project" value="UniProtKB-UniRule"/>
</dbReference>
<dbReference type="CDD" id="cd22363">
    <property type="entry name" value="tRNA-intron_lyase_C"/>
    <property type="match status" value="1"/>
</dbReference>
<dbReference type="FunFam" id="3.40.1350.10:FF:000006">
    <property type="entry name" value="tRNA-splicing endonuclease"/>
    <property type="match status" value="1"/>
</dbReference>
<dbReference type="Gene3D" id="3.40.1350.10">
    <property type="match status" value="1"/>
</dbReference>
<dbReference type="Gene3D" id="3.40.1170.20">
    <property type="entry name" value="tRNA intron endonuclease, N-terminal domain"/>
    <property type="match status" value="1"/>
</dbReference>
<dbReference type="HAMAP" id="MF_01833">
    <property type="entry name" value="EndA_short"/>
    <property type="match status" value="1"/>
</dbReference>
<dbReference type="InterPro" id="IPR011856">
    <property type="entry name" value="tRNA_endonuc-like_dom_sf"/>
</dbReference>
<dbReference type="InterPro" id="IPR036167">
    <property type="entry name" value="tRNA_intron_Endo_cat-like_sf"/>
</dbReference>
<dbReference type="InterPro" id="IPR006677">
    <property type="entry name" value="tRNA_intron_Endonuc_cat-like"/>
</dbReference>
<dbReference type="InterPro" id="IPR006678">
    <property type="entry name" value="tRNA_intron_Endonuc_N"/>
</dbReference>
<dbReference type="InterPro" id="IPR036740">
    <property type="entry name" value="tRNA_intron_Endonuc_N_sf"/>
</dbReference>
<dbReference type="InterPro" id="IPR006676">
    <property type="entry name" value="tRNA_splic"/>
</dbReference>
<dbReference type="InterPro" id="IPR016442">
    <property type="entry name" value="tRNA_splic_arch_short"/>
</dbReference>
<dbReference type="NCBIfam" id="TIGR00324">
    <property type="entry name" value="endA"/>
    <property type="match status" value="1"/>
</dbReference>
<dbReference type="PANTHER" id="PTHR21227">
    <property type="entry name" value="TRNA-SPLICING ENDONUCLEASE SUBUNIT SEN2"/>
    <property type="match status" value="1"/>
</dbReference>
<dbReference type="PANTHER" id="PTHR21227:SF0">
    <property type="entry name" value="TRNA-SPLICING ENDONUCLEASE SUBUNIT SEN2"/>
    <property type="match status" value="1"/>
</dbReference>
<dbReference type="Pfam" id="PF01974">
    <property type="entry name" value="tRNA_int_endo"/>
    <property type="match status" value="1"/>
</dbReference>
<dbReference type="Pfam" id="PF02778">
    <property type="entry name" value="tRNA_int_endo_N"/>
    <property type="match status" value="1"/>
</dbReference>
<dbReference type="PIRSF" id="PIRSF005285">
    <property type="entry name" value="tRNA_splic_archaea"/>
    <property type="match status" value="1"/>
</dbReference>
<dbReference type="SUPFAM" id="SSF53032">
    <property type="entry name" value="tRNA-intron endonuclease catalytic domain-like"/>
    <property type="match status" value="1"/>
</dbReference>
<dbReference type="SUPFAM" id="SSF55267">
    <property type="entry name" value="tRNA-intron endonuclease N-terminal domain-like"/>
    <property type="match status" value="1"/>
</dbReference>
<protein>
    <recommendedName>
        <fullName evidence="1">tRNA-splicing endonuclease</fullName>
        <ecNumber evidence="1">4.6.1.16</ecNumber>
    </recommendedName>
    <alternativeName>
        <fullName evidence="1">tRNA-intron endonuclease</fullName>
    </alternativeName>
</protein>
<sequence length="171" mass="20286">MKEPIEFKLSGDRAFSEREKAINQLYNRRYFGEVVNGKLFLSLIEAAYLMERGKIKVLDGGKELSFEELFELGRKKDDQFDIKYLVYKDLRDRGYIVKSALKFGSHFRVYRRGMDEHSQWLIWVVPENLRFSANDITARVRVAHGVRKNMVMAVVDEDNDVVYYKIEWVKF</sequence>
<accession>B6YXU4</accession>
<keyword id="KW-0456">Lyase</keyword>
<keyword id="KW-0819">tRNA processing</keyword>
<proteinExistence type="inferred from homology"/>
<gene>
    <name evidence="1" type="primary">endA</name>
    <name type="ordered locus">TON_1417</name>
</gene>
<feature type="chain" id="PRO_1000188343" description="tRNA-splicing endonuclease">
    <location>
        <begin position="1"/>
        <end position="171"/>
    </location>
</feature>
<feature type="active site" evidence="1">
    <location>
        <position position="110"/>
    </location>
</feature>
<feature type="active site" evidence="1">
    <location>
        <position position="117"/>
    </location>
</feature>
<feature type="active site" evidence="1">
    <location>
        <position position="148"/>
    </location>
</feature>
<name>ENDA_THEON</name>
<organism>
    <name type="scientific">Thermococcus onnurineus (strain NA1)</name>
    <dbReference type="NCBI Taxonomy" id="523850"/>
    <lineage>
        <taxon>Archaea</taxon>
        <taxon>Methanobacteriati</taxon>
        <taxon>Methanobacteriota</taxon>
        <taxon>Thermococci</taxon>
        <taxon>Thermococcales</taxon>
        <taxon>Thermococcaceae</taxon>
        <taxon>Thermococcus</taxon>
    </lineage>
</organism>
<comment type="function">
    <text evidence="1">Endonuclease that removes tRNA introns. Cleaves pre-tRNA at the 5'- and 3'-splice sites to release the intron. The products are an intron and two tRNA half-molecules bearing 2',3' cyclic phosphate and 5'-OH termini. Recognizes a pseudosymmetric substrate in which 2 bulged loops of 3 bases are separated by a stem of 4 bp.</text>
</comment>
<comment type="catalytic activity">
    <reaction evidence="1">
        <text>pretRNA = a 3'-half-tRNA molecule with a 5'-OH end + a 5'-half-tRNA molecule with a 2',3'-cyclic phosphate end + an intron with a 2',3'-cyclic phosphate and a 5'-hydroxyl terminus.</text>
        <dbReference type="EC" id="4.6.1.16"/>
    </reaction>
</comment>
<comment type="subunit">
    <text evidence="1">Homotetramer; although the tetramer contains four active sites, only two participate in the cleavage. Therefore, it should be considered as a dimer of dimers.</text>
</comment>
<comment type="similarity">
    <text evidence="1">Belongs to the tRNA-intron endonuclease family. Archaeal short subfamily.</text>
</comment>
<reference key="1">
    <citation type="journal article" date="2008" name="J. Bacteriol.">
        <title>The complete genome sequence of Thermococcus onnurineus NA1 reveals a mixed heterotrophic and carboxydotrophic metabolism.</title>
        <authorList>
            <person name="Lee H.S."/>
            <person name="Kang S.G."/>
            <person name="Bae S.S."/>
            <person name="Lim J.K."/>
            <person name="Cho Y."/>
            <person name="Kim Y.J."/>
            <person name="Jeon J.H."/>
            <person name="Cha S.-S."/>
            <person name="Kwon K.K."/>
            <person name="Kim H.-T."/>
            <person name="Park C.-J."/>
            <person name="Lee H.-W."/>
            <person name="Kim S.I."/>
            <person name="Chun J."/>
            <person name="Colwell R.R."/>
            <person name="Kim S.-J."/>
            <person name="Lee J.-H."/>
        </authorList>
    </citation>
    <scope>NUCLEOTIDE SEQUENCE [LARGE SCALE GENOMIC DNA]</scope>
    <source>
        <strain>NA1</strain>
    </source>
</reference>